<gene>
    <name type="ordered locus">MJ0095</name>
</gene>
<sequence>MAIDISGRHHENDIFFRVYAGVLVEIKADRIVHVEKIDVMVKEEETQKLRDIVKEVKELIDKVGDEFDYILCERGEFFNISKDIISAILKKEVIFPKTRGELEAINIAHHVSYSVRKLLIEEKRKS</sequence>
<organism>
    <name type="scientific">Methanocaldococcus jannaschii (strain ATCC 43067 / DSM 2661 / JAL-1 / JCM 10045 / NBRC 100440)</name>
    <name type="common">Methanococcus jannaschii</name>
    <dbReference type="NCBI Taxonomy" id="243232"/>
    <lineage>
        <taxon>Archaea</taxon>
        <taxon>Methanobacteriati</taxon>
        <taxon>Methanobacteriota</taxon>
        <taxon>Methanomada group</taxon>
        <taxon>Methanococci</taxon>
        <taxon>Methanococcales</taxon>
        <taxon>Methanocaldococcaceae</taxon>
        <taxon>Methanocaldococcus</taxon>
    </lineage>
</organism>
<proteinExistence type="predicted"/>
<accession>Q57560</accession>
<keyword id="KW-1185">Reference proteome</keyword>
<feature type="chain" id="PRO_0000106691" description="Uncharacterized protein MJ0095">
    <location>
        <begin position="1"/>
        <end position="126"/>
    </location>
</feature>
<protein>
    <recommendedName>
        <fullName>Uncharacterized protein MJ0095</fullName>
    </recommendedName>
</protein>
<reference key="1">
    <citation type="journal article" date="1996" name="Science">
        <title>Complete genome sequence of the methanogenic archaeon, Methanococcus jannaschii.</title>
        <authorList>
            <person name="Bult C.J."/>
            <person name="White O."/>
            <person name="Olsen G.J."/>
            <person name="Zhou L."/>
            <person name="Fleischmann R.D."/>
            <person name="Sutton G.G."/>
            <person name="Blake J.A."/>
            <person name="FitzGerald L.M."/>
            <person name="Clayton R.A."/>
            <person name="Gocayne J.D."/>
            <person name="Kerlavage A.R."/>
            <person name="Dougherty B.A."/>
            <person name="Tomb J.-F."/>
            <person name="Adams M.D."/>
            <person name="Reich C.I."/>
            <person name="Overbeek R."/>
            <person name="Kirkness E.F."/>
            <person name="Weinstock K.G."/>
            <person name="Merrick J.M."/>
            <person name="Glodek A."/>
            <person name="Scott J.L."/>
            <person name="Geoghagen N.S.M."/>
            <person name="Weidman J.F."/>
            <person name="Fuhrmann J.L."/>
            <person name="Nguyen D."/>
            <person name="Utterback T.R."/>
            <person name="Kelley J.M."/>
            <person name="Peterson J.D."/>
            <person name="Sadow P.W."/>
            <person name="Hanna M.C."/>
            <person name="Cotton M.D."/>
            <person name="Roberts K.M."/>
            <person name="Hurst M.A."/>
            <person name="Kaine B.P."/>
            <person name="Borodovsky M."/>
            <person name="Klenk H.-P."/>
            <person name="Fraser C.M."/>
            <person name="Smith H.O."/>
            <person name="Woese C.R."/>
            <person name="Venter J.C."/>
        </authorList>
    </citation>
    <scope>NUCLEOTIDE SEQUENCE [LARGE SCALE GENOMIC DNA]</scope>
    <source>
        <strain>ATCC 43067 / DSM 2661 / JAL-1 / JCM 10045 / NBRC 100440</strain>
    </source>
</reference>
<dbReference type="EMBL" id="L77117">
    <property type="protein sequence ID" value="AAB98086.1"/>
    <property type="molecule type" value="Genomic_DNA"/>
</dbReference>
<dbReference type="PIR" id="G64311">
    <property type="entry name" value="G64311"/>
</dbReference>
<dbReference type="RefSeq" id="WP_010869587.1">
    <property type="nucleotide sequence ID" value="NC_000909.1"/>
</dbReference>
<dbReference type="STRING" id="243232.MJ_0095"/>
<dbReference type="PaxDb" id="243232-MJ_0095"/>
<dbReference type="EnsemblBacteria" id="AAB98086">
    <property type="protein sequence ID" value="AAB98086"/>
    <property type="gene ID" value="MJ_0095"/>
</dbReference>
<dbReference type="GeneID" id="1450934"/>
<dbReference type="KEGG" id="mja:MJ_0095"/>
<dbReference type="eggNOG" id="arCOG05010">
    <property type="taxonomic scope" value="Archaea"/>
</dbReference>
<dbReference type="HOGENOM" id="CLU_143941_0_0_2"/>
<dbReference type="InParanoid" id="Q57560"/>
<dbReference type="OrthoDB" id="120192at2157"/>
<dbReference type="Proteomes" id="UP000000805">
    <property type="component" value="Chromosome"/>
</dbReference>
<dbReference type="InterPro" id="IPR014514">
    <property type="entry name" value="UCP021940"/>
</dbReference>
<dbReference type="Pfam" id="PF09974">
    <property type="entry name" value="DUF2209"/>
    <property type="match status" value="1"/>
</dbReference>
<dbReference type="PIRSF" id="PIRSF021940">
    <property type="entry name" value="UCP021940"/>
    <property type="match status" value="1"/>
</dbReference>
<name>Y095_METJA</name>